<protein>
    <recommendedName>
        <fullName evidence="1">UPF0145 protein PERMA_0324</fullName>
    </recommendedName>
</protein>
<feature type="chain" id="PRO_1000200232" description="UPF0145 protein PERMA_0324">
    <location>
        <begin position="1"/>
        <end position="103"/>
    </location>
</feature>
<evidence type="ECO:0000255" key="1">
    <source>
        <dbReference type="HAMAP-Rule" id="MF_00338"/>
    </source>
</evidence>
<gene>
    <name type="ordered locus">PERMA_0324</name>
</gene>
<dbReference type="EMBL" id="CP001230">
    <property type="protein sequence ID" value="ACO03470.1"/>
    <property type="molecule type" value="Genomic_DNA"/>
</dbReference>
<dbReference type="RefSeq" id="WP_012675709.1">
    <property type="nucleotide sequence ID" value="NC_012440.1"/>
</dbReference>
<dbReference type="SMR" id="C0QTV2"/>
<dbReference type="STRING" id="123214.PERMA_0324"/>
<dbReference type="PaxDb" id="123214-PERMA_0324"/>
<dbReference type="KEGG" id="pmx:PERMA_0324"/>
<dbReference type="eggNOG" id="COG0393">
    <property type="taxonomic scope" value="Bacteria"/>
</dbReference>
<dbReference type="HOGENOM" id="CLU_117144_3_2_0"/>
<dbReference type="OrthoDB" id="9796448at2"/>
<dbReference type="Proteomes" id="UP000001366">
    <property type="component" value="Chromosome"/>
</dbReference>
<dbReference type="Gene3D" id="3.30.110.70">
    <property type="entry name" value="Hypothetical protein apc22750. Chain B"/>
    <property type="match status" value="1"/>
</dbReference>
<dbReference type="HAMAP" id="MF_00338">
    <property type="entry name" value="UPF0145"/>
    <property type="match status" value="1"/>
</dbReference>
<dbReference type="InterPro" id="IPR035439">
    <property type="entry name" value="UPF0145_dom_sf"/>
</dbReference>
<dbReference type="InterPro" id="IPR002765">
    <property type="entry name" value="UPF0145_YbjQ-like"/>
</dbReference>
<dbReference type="PANTHER" id="PTHR34068">
    <property type="entry name" value="UPF0145 PROTEIN YBJQ"/>
    <property type="match status" value="1"/>
</dbReference>
<dbReference type="PANTHER" id="PTHR34068:SF1">
    <property type="entry name" value="UPF0145 PROTEIN YBJQ"/>
    <property type="match status" value="1"/>
</dbReference>
<dbReference type="Pfam" id="PF01906">
    <property type="entry name" value="YbjQ_1"/>
    <property type="match status" value="1"/>
</dbReference>
<dbReference type="SUPFAM" id="SSF117782">
    <property type="entry name" value="YbjQ-like"/>
    <property type="match status" value="1"/>
</dbReference>
<keyword id="KW-1185">Reference proteome</keyword>
<accession>C0QTV2</accession>
<sequence length="103" mass="11468">MIITTTDFIEGKKIRDYKGVVSKEAVIGVNIIRDVFAKVRDIVGGRSAAYEKELTNARNQILEELKEEARNLGANAVIGINFSYEMYQSMLLVSVWGTAVVVE</sequence>
<name>Y324_PERMH</name>
<proteinExistence type="inferred from homology"/>
<reference key="1">
    <citation type="journal article" date="2009" name="J. Bacteriol.">
        <title>Complete and draft genome sequences of six members of the Aquificales.</title>
        <authorList>
            <person name="Reysenbach A.-L."/>
            <person name="Hamamura N."/>
            <person name="Podar M."/>
            <person name="Griffiths E."/>
            <person name="Ferreira S."/>
            <person name="Hochstein R."/>
            <person name="Heidelberg J."/>
            <person name="Johnson J."/>
            <person name="Mead D."/>
            <person name="Pohorille A."/>
            <person name="Sarmiento M."/>
            <person name="Schweighofer K."/>
            <person name="Seshadri R."/>
            <person name="Voytek M.A."/>
        </authorList>
    </citation>
    <scope>NUCLEOTIDE SEQUENCE [LARGE SCALE GENOMIC DNA]</scope>
    <source>
        <strain>DSM 14350 / EX-H1</strain>
    </source>
</reference>
<comment type="similarity">
    <text evidence="1">Belongs to the UPF0145 family.</text>
</comment>
<organism>
    <name type="scientific">Persephonella marina (strain DSM 14350 / EX-H1)</name>
    <dbReference type="NCBI Taxonomy" id="123214"/>
    <lineage>
        <taxon>Bacteria</taxon>
        <taxon>Pseudomonadati</taxon>
        <taxon>Aquificota</taxon>
        <taxon>Aquificia</taxon>
        <taxon>Aquificales</taxon>
        <taxon>Hydrogenothermaceae</taxon>
        <taxon>Persephonella</taxon>
    </lineage>
</organism>